<accession>Q95PZ2</accession>
<accession>H1UBL1</accession>
<accession>H1UBL2</accession>
<accession>Q8I0Y9</accession>
<keyword id="KW-0025">Alternative splicing</keyword>
<keyword id="KW-0106">Calcium</keyword>
<keyword id="KW-0109">Calcium transport</keyword>
<keyword id="KW-0406">Ion transport</keyword>
<keyword id="KW-0472">Membrane</keyword>
<keyword id="KW-0479">Metal-binding</keyword>
<keyword id="KW-0496">Mitochondrion</keyword>
<keyword id="KW-0999">Mitochondrion inner membrane</keyword>
<keyword id="KW-1185">Reference proteome</keyword>
<keyword id="KW-0677">Repeat</keyword>
<keyword id="KW-0809">Transit peptide</keyword>
<keyword id="KW-0813">Transport</keyword>
<sequence length="534" mass="62120">MLHCSFLRVIPIKNASKRLIIVRSLTSAPAKTSEAEKQQDSLKNIDAGEKYTALGNIRQKKDVFHYTDRASGVGYSHYSSSVYQHRPYIWPPLRKLYHWNYALVIAGMVILMSDFEWLKDQIKSASLPFRPEASQKEEVTESNGEVEEVKEKPKKKKLGFRERRIIEYEDRLRLYSTPDKIFRYFATLKIIDPNEDSGRFEVFMTPEDFLRSFTPGVMQPRRWGLDSFKNYNPEKHKRHKFSDPDSIFYKLGENGLINFSDYLFLMTLLSTSHADFALAFKIFDVDGNGALDKEEFTKVQQLIMSQTTVGQRHRDHITPNQSFRVETNSALETYFFGKDGKGSLSSEKFIEFQERLQHDILKMEFERRDALDNPDGLINEDSFAQLLLLHAQINEKKQKHMLKRVKRRFKGENLKGISFGETKAFFEFLYHIDDVDIALHFHKMAGMSIDAKLLQRVAVKVTGIPLSDHVVDVVITLFDDNLDGKLSHEEMVAVMRRRMRRGLERPRDTGLFRLFDAVLECGKRAYHASPLPFY</sequence>
<comment type="function">
    <text evidence="1 5 6">Calcium sensor of the mitochondrial calcium uniporter (mcu-1) channel, which senses calcium level via its EF-hand domains (PubMed:31983639). At low calcium levels, micu-1 occludes the pore of the mcu-1 channel, preventing mitochondrial calcium uptake. At higher calcium levels, calcium-binding to micu-1 induces a conformational change that weakens mcu-1-micu-1 interactions and moves micu-1 away from the pore, allowing calcium permeation through the mcu-1 channel (By similarity). Also required to protect against manganese toxicity by preventing manganese uptake by mcu-1 (PubMed:30082385). Modulates the activity of the mitochondrial calcium uniporter protein mcu-1 depending on the level of intracellular calcium in PLM touch receptor neurons following axonal injury (PubMed:31983639).</text>
</comment>
<comment type="subcellular location">
    <subcellularLocation>
        <location evidence="1">Mitochondrion intermembrane space</location>
    </subcellularLocation>
    <subcellularLocation>
        <location evidence="1">Mitochondrion inner membrane</location>
    </subcellularLocation>
</comment>
<comment type="alternative products">
    <event type="alternative splicing"/>
    <isoform>
        <id>Q95PZ2-1</id>
        <name evidence="9">d</name>
        <sequence type="displayed"/>
    </isoform>
    <isoform>
        <id>Q95PZ2-3</id>
        <name evidence="8">c</name>
        <sequence type="described" ref="VSP_039909 VSP_039910"/>
    </isoform>
</comment>
<comment type="tissue specificity">
    <text evidence="6">Expressed at low levels in PLM touch receptor neurons, germ cells, epidermis, and muscles.</text>
</comment>
<comment type="domain">
    <text evidence="1">The EF-hand domains have high affinity for calcium and act as sensors of calcium levels.</text>
</comment>
<comment type="similarity">
    <text evidence="7">Belongs to the MICU1 family. MICU1 subfamily.</text>
</comment>
<reference key="1">
    <citation type="journal article" date="1998" name="Science">
        <title>Genome sequence of the nematode C. elegans: a platform for investigating biology.</title>
        <authorList>
            <consortium name="The C. elegans sequencing consortium"/>
        </authorList>
    </citation>
    <scope>NUCLEOTIDE SEQUENCE [LARGE SCALE GENOMIC DNA]</scope>
    <source>
        <strain>Bristol N2</strain>
    </source>
</reference>
<reference key="2">
    <citation type="journal article" date="2020" name="Curr. Biol.">
        <title>The mRNA Decay Factor CAR-1/LSM14 Regulates Axon Regeneration via Mitochondrial Calcium Dynamics.</title>
        <authorList>
            <person name="Tang N.H."/>
            <person name="Kim K.W."/>
            <person name="Xu S."/>
            <person name="Blazie S.M."/>
            <person name="Yee B.A."/>
            <person name="Yeo G.W."/>
            <person name="Jin Y."/>
            <person name="Chisholm A.D."/>
        </authorList>
    </citation>
    <scope>FUNCTION</scope>
    <scope>SUBCELLULAR LOCATION</scope>
    <scope>TISSUE SPECIFICITY</scope>
</reference>
<reference key="3">
    <citation type="journal article" date="2018" name="Proc. Natl. Acad. Sci. U.S.A.">
        <title>MICU1 imparts the mitochondrial uniporter with the ability to discriminate between Ca2+ and Mn2+.</title>
        <authorList>
            <person name="Kamer K.J."/>
            <person name="Sancak Y."/>
            <person name="Fomina Y."/>
            <person name="Meisel J.D."/>
            <person name="Chaudhuri D."/>
            <person name="Grabarek Z."/>
            <person name="Mootha V.K."/>
        </authorList>
    </citation>
    <scope>FUNCTION</scope>
</reference>
<evidence type="ECO:0000250" key="1">
    <source>
        <dbReference type="UniProtKB" id="Q9BPX6"/>
    </source>
</evidence>
<evidence type="ECO:0000255" key="2"/>
<evidence type="ECO:0000255" key="3">
    <source>
        <dbReference type="PROSITE-ProRule" id="PRU00448"/>
    </source>
</evidence>
<evidence type="ECO:0000256" key="4">
    <source>
        <dbReference type="SAM" id="MobiDB-lite"/>
    </source>
</evidence>
<evidence type="ECO:0000269" key="5">
    <source>
    </source>
</evidence>
<evidence type="ECO:0000269" key="6">
    <source>
    </source>
</evidence>
<evidence type="ECO:0000305" key="7"/>
<evidence type="ECO:0000312" key="8">
    <source>
        <dbReference type="WormBase" id="Y67H2A.4c"/>
    </source>
</evidence>
<evidence type="ECO:0000312" key="9">
    <source>
        <dbReference type="WormBase" id="Y67H2A.4d"/>
    </source>
</evidence>
<dbReference type="EMBL" id="BX284604">
    <property type="protein sequence ID" value="CCF23405.1"/>
    <property type="molecule type" value="Genomic_DNA"/>
</dbReference>
<dbReference type="EMBL" id="BX284604">
    <property type="protein sequence ID" value="CCF23406.1"/>
    <property type="molecule type" value="Genomic_DNA"/>
</dbReference>
<dbReference type="RefSeq" id="NP_001255723.1">
    <molecule id="Q95PZ2-1"/>
    <property type="nucleotide sequence ID" value="NM_001268794.3"/>
</dbReference>
<dbReference type="RefSeq" id="NP_001255724.1">
    <property type="nucleotide sequence ID" value="NM_001268795.1"/>
</dbReference>
<dbReference type="RefSeq" id="NP_001360161.1">
    <molecule id="Q95PZ2-3"/>
    <property type="nucleotide sequence ID" value="NM_001372949.1"/>
</dbReference>
<dbReference type="SMR" id="Q95PZ2"/>
<dbReference type="BioGRID" id="43376">
    <property type="interactions" value="1"/>
</dbReference>
<dbReference type="FunCoup" id="Q95PZ2">
    <property type="interactions" value="2520"/>
</dbReference>
<dbReference type="STRING" id="6239.Y67H2A.4d.1"/>
<dbReference type="PaxDb" id="6239-Y67H2A.4a"/>
<dbReference type="EnsemblMetazoa" id="Y67H2A.4c.1">
    <molecule id="Q95PZ2-3"/>
    <property type="protein sequence ID" value="Y67H2A.4c.1"/>
    <property type="gene ID" value="WBGene00013462"/>
</dbReference>
<dbReference type="EnsemblMetazoa" id="Y67H2A.4c.2">
    <molecule id="Q95PZ2-3"/>
    <property type="protein sequence ID" value="Y67H2A.4c.2"/>
    <property type="gene ID" value="WBGene00013462"/>
</dbReference>
<dbReference type="EnsemblMetazoa" id="Y67H2A.4d.1">
    <molecule id="Q95PZ2-1"/>
    <property type="protein sequence ID" value="Y67H2A.4d.1"/>
    <property type="gene ID" value="WBGene00013462"/>
</dbReference>
<dbReference type="GeneID" id="178287"/>
<dbReference type="KEGG" id="cel:CELE_Y67H2A.4"/>
<dbReference type="UCSC" id="Y67H2A.4b">
    <property type="organism name" value="c. elegans"/>
</dbReference>
<dbReference type="AGR" id="WB:WBGene00013462"/>
<dbReference type="CTD" id="178287"/>
<dbReference type="WormBase" id="Y67H2A.4c">
    <molecule id="Q95PZ2-3"/>
    <property type="protein sequence ID" value="CE47026"/>
    <property type="gene ID" value="WBGene00013462"/>
    <property type="gene designation" value="micu-1"/>
</dbReference>
<dbReference type="WormBase" id="Y67H2A.4d">
    <molecule id="Q95PZ2-1"/>
    <property type="protein sequence ID" value="CE47067"/>
    <property type="gene ID" value="WBGene00013462"/>
    <property type="gene designation" value="micu-1"/>
</dbReference>
<dbReference type="eggNOG" id="KOG2643">
    <property type="taxonomic scope" value="Eukaryota"/>
</dbReference>
<dbReference type="GeneTree" id="ENSGT00950000183079"/>
<dbReference type="HOGENOM" id="CLU_027103_3_0_1"/>
<dbReference type="InParanoid" id="Q95PZ2"/>
<dbReference type="OMA" id="VRTEVWK"/>
<dbReference type="OrthoDB" id="10056860at2759"/>
<dbReference type="PhylomeDB" id="Q95PZ2"/>
<dbReference type="Reactome" id="R-CEL-8949215">
    <property type="pathway name" value="Mitochondrial calcium ion transport"/>
</dbReference>
<dbReference type="Reactome" id="R-CEL-8949664">
    <property type="pathway name" value="Processing of SMDT1"/>
</dbReference>
<dbReference type="PRO" id="PR:Q95PZ2"/>
<dbReference type="Proteomes" id="UP000001940">
    <property type="component" value="Chromosome IV"/>
</dbReference>
<dbReference type="Bgee" id="WBGene00013462">
    <property type="expression patterns" value="Expressed in adult organism and 3 other cell types or tissues"/>
</dbReference>
<dbReference type="GO" id="GO:0005758">
    <property type="term" value="C:mitochondrial intermembrane space"/>
    <property type="evidence" value="ECO:0007669"/>
    <property type="project" value="UniProtKB-SubCell"/>
</dbReference>
<dbReference type="GO" id="GO:1990246">
    <property type="term" value="C:uniplex complex"/>
    <property type="evidence" value="ECO:0000318"/>
    <property type="project" value="GO_Central"/>
</dbReference>
<dbReference type="GO" id="GO:0005509">
    <property type="term" value="F:calcium ion binding"/>
    <property type="evidence" value="ECO:0000318"/>
    <property type="project" value="GO_Central"/>
</dbReference>
<dbReference type="GO" id="GO:0036444">
    <property type="term" value="P:calcium import into the mitochondrion"/>
    <property type="evidence" value="ECO:0000318"/>
    <property type="project" value="GO_Central"/>
</dbReference>
<dbReference type="GO" id="GO:0051560">
    <property type="term" value="P:mitochondrial calcium ion homeostasis"/>
    <property type="evidence" value="ECO:0000318"/>
    <property type="project" value="GO_Central"/>
</dbReference>
<dbReference type="GO" id="GO:0051561">
    <property type="term" value="P:positive regulation of mitochondrial calcium ion concentration"/>
    <property type="evidence" value="ECO:0000250"/>
    <property type="project" value="UniProtKB"/>
</dbReference>
<dbReference type="CDD" id="cd15900">
    <property type="entry name" value="EFh_MICU"/>
    <property type="match status" value="1"/>
</dbReference>
<dbReference type="FunFam" id="1.10.238.10:FF:000837">
    <property type="entry name" value="Calcium uptake protein 1 homolog, mitochondrial"/>
    <property type="match status" value="1"/>
</dbReference>
<dbReference type="Gene3D" id="1.10.238.10">
    <property type="entry name" value="EF-hand"/>
    <property type="match status" value="2"/>
</dbReference>
<dbReference type="InterPro" id="IPR011992">
    <property type="entry name" value="EF-hand-dom_pair"/>
</dbReference>
<dbReference type="InterPro" id="IPR018247">
    <property type="entry name" value="EF_Hand_1_Ca_BS"/>
</dbReference>
<dbReference type="InterPro" id="IPR002048">
    <property type="entry name" value="EF_hand_dom"/>
</dbReference>
<dbReference type="InterPro" id="IPR039800">
    <property type="entry name" value="MICU1/2/3"/>
</dbReference>
<dbReference type="PANTHER" id="PTHR12294:SF1">
    <property type="entry name" value="CALCIUM UPTAKE PROTEIN 1, MITOCHONDRIAL"/>
    <property type="match status" value="1"/>
</dbReference>
<dbReference type="PANTHER" id="PTHR12294">
    <property type="entry name" value="EF HAND DOMAIN FAMILY A1,A2-RELATED"/>
    <property type="match status" value="1"/>
</dbReference>
<dbReference type="Pfam" id="PF13202">
    <property type="entry name" value="EF-hand_5"/>
    <property type="match status" value="1"/>
</dbReference>
<dbReference type="Pfam" id="PF13833">
    <property type="entry name" value="EF-hand_8"/>
    <property type="match status" value="1"/>
</dbReference>
<dbReference type="SMART" id="SM00054">
    <property type="entry name" value="EFh"/>
    <property type="match status" value="2"/>
</dbReference>
<dbReference type="SUPFAM" id="SSF47473">
    <property type="entry name" value="EF-hand"/>
    <property type="match status" value="1"/>
</dbReference>
<dbReference type="PROSITE" id="PS00018">
    <property type="entry name" value="EF_HAND_1"/>
    <property type="match status" value="1"/>
</dbReference>
<dbReference type="PROSITE" id="PS50222">
    <property type="entry name" value="EF_HAND_2"/>
    <property type="match status" value="3"/>
</dbReference>
<organism>
    <name type="scientific">Caenorhabditis elegans</name>
    <dbReference type="NCBI Taxonomy" id="6239"/>
    <lineage>
        <taxon>Eukaryota</taxon>
        <taxon>Metazoa</taxon>
        <taxon>Ecdysozoa</taxon>
        <taxon>Nematoda</taxon>
        <taxon>Chromadorea</taxon>
        <taxon>Rhabditida</taxon>
        <taxon>Rhabditina</taxon>
        <taxon>Rhabditomorpha</taxon>
        <taxon>Rhabditoidea</taxon>
        <taxon>Rhabditidae</taxon>
        <taxon>Peloderinae</taxon>
        <taxon>Caenorhabditis</taxon>
    </lineage>
</organism>
<proteinExistence type="evidence at transcript level"/>
<feature type="transit peptide" description="Mitochondrion" evidence="2">
    <location>
        <begin position="1"/>
        <end position="32"/>
    </location>
</feature>
<feature type="chain" id="PRO_0000399811" description="Calcium uptake protein 1 homolog, mitochondrial">
    <location>
        <begin position="33"/>
        <end position="534"/>
    </location>
</feature>
<feature type="domain" description="EF-hand 1" evidence="3">
    <location>
        <begin position="271"/>
        <end position="306"/>
    </location>
</feature>
<feature type="domain" description="EF-hand 2" evidence="3">
    <location>
        <begin position="338"/>
        <end position="359"/>
    </location>
</feature>
<feature type="domain" description="EF-hand 3" evidence="3">
    <location>
        <begin position="466"/>
        <end position="501"/>
    </location>
</feature>
<feature type="region of interest" description="Disordered" evidence="4">
    <location>
        <begin position="131"/>
        <end position="150"/>
    </location>
</feature>
<feature type="binding site" evidence="3">
    <location>
        <position position="284"/>
    </location>
    <ligand>
        <name>Ca(2+)</name>
        <dbReference type="ChEBI" id="CHEBI:29108"/>
    </ligand>
</feature>
<feature type="binding site" evidence="3">
    <location>
        <position position="286"/>
    </location>
    <ligand>
        <name>Ca(2+)</name>
        <dbReference type="ChEBI" id="CHEBI:29108"/>
    </ligand>
</feature>
<feature type="binding site" evidence="3">
    <location>
        <position position="288"/>
    </location>
    <ligand>
        <name>Ca(2+)</name>
        <dbReference type="ChEBI" id="CHEBI:29108"/>
    </ligand>
</feature>
<feature type="binding site" evidence="3">
    <location>
        <position position="295"/>
    </location>
    <ligand>
        <name>Ca(2+)</name>
        <dbReference type="ChEBI" id="CHEBI:29108"/>
    </ligand>
</feature>
<feature type="splice variant" id="VSP_039909" description="In isoform c." evidence="7">
    <original>EVTES</original>
    <variation>VSCSC</variation>
    <location>
        <begin position="138"/>
        <end position="142"/>
    </location>
</feature>
<feature type="splice variant" id="VSP_039910" description="In isoform c." evidence="7">
    <location>
        <begin position="143"/>
        <end position="534"/>
    </location>
</feature>
<protein>
    <recommendedName>
        <fullName>Calcium uptake protein 1 homolog, mitochondrial</fullName>
    </recommendedName>
</protein>
<name>MICU1_CAEEL</name>
<gene>
    <name evidence="9" type="primary">micu-1</name>
    <name evidence="9" type="ORF">Y67H2A.4</name>
</gene>